<dbReference type="EMBL" id="CP000507">
    <property type="protein sequence ID" value="ABL98428.1"/>
    <property type="molecule type" value="Genomic_DNA"/>
</dbReference>
<dbReference type="RefSeq" id="WP_011758338.1">
    <property type="nucleotide sequence ID" value="NC_008700.1"/>
</dbReference>
<dbReference type="SMR" id="A1S222"/>
<dbReference type="STRING" id="326297.Sama_0217"/>
<dbReference type="KEGG" id="saz:Sama_0217"/>
<dbReference type="eggNOG" id="COG0185">
    <property type="taxonomic scope" value="Bacteria"/>
</dbReference>
<dbReference type="HOGENOM" id="CLU_144911_0_1_6"/>
<dbReference type="OrthoDB" id="9797833at2"/>
<dbReference type="Proteomes" id="UP000009175">
    <property type="component" value="Chromosome"/>
</dbReference>
<dbReference type="GO" id="GO:0005737">
    <property type="term" value="C:cytoplasm"/>
    <property type="evidence" value="ECO:0007669"/>
    <property type="project" value="UniProtKB-ARBA"/>
</dbReference>
<dbReference type="GO" id="GO:0015935">
    <property type="term" value="C:small ribosomal subunit"/>
    <property type="evidence" value="ECO:0007669"/>
    <property type="project" value="InterPro"/>
</dbReference>
<dbReference type="GO" id="GO:0019843">
    <property type="term" value="F:rRNA binding"/>
    <property type="evidence" value="ECO:0007669"/>
    <property type="project" value="UniProtKB-UniRule"/>
</dbReference>
<dbReference type="GO" id="GO:0003735">
    <property type="term" value="F:structural constituent of ribosome"/>
    <property type="evidence" value="ECO:0007669"/>
    <property type="project" value="InterPro"/>
</dbReference>
<dbReference type="GO" id="GO:0000028">
    <property type="term" value="P:ribosomal small subunit assembly"/>
    <property type="evidence" value="ECO:0007669"/>
    <property type="project" value="TreeGrafter"/>
</dbReference>
<dbReference type="GO" id="GO:0006412">
    <property type="term" value="P:translation"/>
    <property type="evidence" value="ECO:0007669"/>
    <property type="project" value="UniProtKB-UniRule"/>
</dbReference>
<dbReference type="FunFam" id="3.30.860.10:FF:000001">
    <property type="entry name" value="30S ribosomal protein S19"/>
    <property type="match status" value="1"/>
</dbReference>
<dbReference type="Gene3D" id="3.30.860.10">
    <property type="entry name" value="30s Ribosomal Protein S19, Chain A"/>
    <property type="match status" value="1"/>
</dbReference>
<dbReference type="HAMAP" id="MF_00531">
    <property type="entry name" value="Ribosomal_uS19"/>
    <property type="match status" value="1"/>
</dbReference>
<dbReference type="InterPro" id="IPR002222">
    <property type="entry name" value="Ribosomal_uS19"/>
</dbReference>
<dbReference type="InterPro" id="IPR005732">
    <property type="entry name" value="Ribosomal_uS19_bac-type"/>
</dbReference>
<dbReference type="InterPro" id="IPR020934">
    <property type="entry name" value="Ribosomal_uS19_CS"/>
</dbReference>
<dbReference type="InterPro" id="IPR023575">
    <property type="entry name" value="Ribosomal_uS19_SF"/>
</dbReference>
<dbReference type="NCBIfam" id="TIGR01050">
    <property type="entry name" value="rpsS_bact"/>
    <property type="match status" value="1"/>
</dbReference>
<dbReference type="PANTHER" id="PTHR11880">
    <property type="entry name" value="RIBOSOMAL PROTEIN S19P FAMILY MEMBER"/>
    <property type="match status" value="1"/>
</dbReference>
<dbReference type="PANTHER" id="PTHR11880:SF8">
    <property type="entry name" value="SMALL RIBOSOMAL SUBUNIT PROTEIN US19M"/>
    <property type="match status" value="1"/>
</dbReference>
<dbReference type="Pfam" id="PF00203">
    <property type="entry name" value="Ribosomal_S19"/>
    <property type="match status" value="1"/>
</dbReference>
<dbReference type="PIRSF" id="PIRSF002144">
    <property type="entry name" value="Ribosomal_S19"/>
    <property type="match status" value="1"/>
</dbReference>
<dbReference type="PRINTS" id="PR00975">
    <property type="entry name" value="RIBOSOMALS19"/>
</dbReference>
<dbReference type="SUPFAM" id="SSF54570">
    <property type="entry name" value="Ribosomal protein S19"/>
    <property type="match status" value="1"/>
</dbReference>
<dbReference type="PROSITE" id="PS00323">
    <property type="entry name" value="RIBOSOMAL_S19"/>
    <property type="match status" value="1"/>
</dbReference>
<reference key="1">
    <citation type="submission" date="2006-12" db="EMBL/GenBank/DDBJ databases">
        <title>Complete sequence of Shewanella amazonensis SB2B.</title>
        <authorList>
            <consortium name="US DOE Joint Genome Institute"/>
            <person name="Copeland A."/>
            <person name="Lucas S."/>
            <person name="Lapidus A."/>
            <person name="Barry K."/>
            <person name="Detter J.C."/>
            <person name="Glavina del Rio T."/>
            <person name="Hammon N."/>
            <person name="Israni S."/>
            <person name="Dalin E."/>
            <person name="Tice H."/>
            <person name="Pitluck S."/>
            <person name="Munk A.C."/>
            <person name="Brettin T."/>
            <person name="Bruce D."/>
            <person name="Han C."/>
            <person name="Tapia R."/>
            <person name="Gilna P."/>
            <person name="Schmutz J."/>
            <person name="Larimer F."/>
            <person name="Land M."/>
            <person name="Hauser L."/>
            <person name="Kyrpides N."/>
            <person name="Mikhailova N."/>
            <person name="Fredrickson J."/>
            <person name="Richardson P."/>
        </authorList>
    </citation>
    <scope>NUCLEOTIDE SEQUENCE [LARGE SCALE GENOMIC DNA]</scope>
    <source>
        <strain>ATCC BAA-1098 / SB2B</strain>
    </source>
</reference>
<evidence type="ECO:0000255" key="1">
    <source>
        <dbReference type="HAMAP-Rule" id="MF_00531"/>
    </source>
</evidence>
<evidence type="ECO:0000305" key="2"/>
<name>RS19_SHEAM</name>
<feature type="chain" id="PRO_1000051120" description="Small ribosomal subunit protein uS19">
    <location>
        <begin position="1"/>
        <end position="92"/>
    </location>
</feature>
<accession>A1S222</accession>
<protein>
    <recommendedName>
        <fullName evidence="1">Small ribosomal subunit protein uS19</fullName>
    </recommendedName>
    <alternativeName>
        <fullName evidence="2">30S ribosomal protein S19</fullName>
    </alternativeName>
</protein>
<gene>
    <name evidence="1" type="primary">rpsS</name>
    <name type="ordered locus">Sama_0217</name>
</gene>
<organism>
    <name type="scientific">Shewanella amazonensis (strain ATCC BAA-1098 / SB2B)</name>
    <dbReference type="NCBI Taxonomy" id="326297"/>
    <lineage>
        <taxon>Bacteria</taxon>
        <taxon>Pseudomonadati</taxon>
        <taxon>Pseudomonadota</taxon>
        <taxon>Gammaproteobacteria</taxon>
        <taxon>Alteromonadales</taxon>
        <taxon>Shewanellaceae</taxon>
        <taxon>Shewanella</taxon>
    </lineage>
</organism>
<sequence>MPRSLKKGPFIDLHLLKKVEKAVEAGDKKPIKTWSRRSMIIPQMIGLTIAVHNGRQHVPVFVTDEMIGHKLGEFSPTRTYRGHAADKKAKKR</sequence>
<keyword id="KW-1185">Reference proteome</keyword>
<keyword id="KW-0687">Ribonucleoprotein</keyword>
<keyword id="KW-0689">Ribosomal protein</keyword>
<keyword id="KW-0694">RNA-binding</keyword>
<keyword id="KW-0699">rRNA-binding</keyword>
<proteinExistence type="inferred from homology"/>
<comment type="function">
    <text evidence="1">Protein S19 forms a complex with S13 that binds strongly to the 16S ribosomal RNA.</text>
</comment>
<comment type="similarity">
    <text evidence="1">Belongs to the universal ribosomal protein uS19 family.</text>
</comment>